<protein>
    <recommendedName>
        <fullName>Pre-B-cell leukemia transcription factor 1</fullName>
    </recommendedName>
    <alternativeName>
        <fullName>Homeobox protein PBX1</fullName>
    </alternativeName>
</protein>
<evidence type="ECO:0000250" key="1">
    <source>
        <dbReference type="UniProtKB" id="P40424"/>
    </source>
</evidence>
<evidence type="ECO:0000255" key="2">
    <source>
        <dbReference type="PROSITE-ProRule" id="PRU00108"/>
    </source>
</evidence>
<evidence type="ECO:0000255" key="3">
    <source>
        <dbReference type="PROSITE-ProRule" id="PRU01322"/>
    </source>
</evidence>
<evidence type="ECO:0000256" key="4">
    <source>
        <dbReference type="SAM" id="MobiDB-lite"/>
    </source>
</evidence>
<evidence type="ECO:0000269" key="5">
    <source>
    </source>
</evidence>
<evidence type="ECO:0000269" key="6">
    <source>
    </source>
</evidence>
<evidence type="ECO:0000269" key="7">
    <source>
    </source>
</evidence>
<evidence type="ECO:0000269" key="8">
    <source>
    </source>
</evidence>
<evidence type="ECO:0000269" key="9">
    <source>
    </source>
</evidence>
<evidence type="ECO:0000269" key="10">
    <source>
    </source>
</evidence>
<evidence type="ECO:0000269" key="11">
    <source>
    </source>
</evidence>
<evidence type="ECO:0000269" key="12">
    <source>
    </source>
</evidence>
<evidence type="ECO:0000269" key="13">
    <source>
    </source>
</evidence>
<evidence type="ECO:0000269" key="14">
    <source>
    </source>
</evidence>
<evidence type="ECO:0000269" key="15">
    <source>
    </source>
</evidence>
<evidence type="ECO:0000269" key="16">
    <source>
    </source>
</evidence>
<evidence type="ECO:0000269" key="17">
    <source>
    </source>
</evidence>
<evidence type="ECO:0000303" key="18">
    <source>
    </source>
</evidence>
<evidence type="ECO:0000305" key="19"/>
<evidence type="ECO:0007829" key="20">
    <source>
        <dbReference type="PDB" id="1DU6"/>
    </source>
</evidence>
<evidence type="ECO:0007829" key="21">
    <source>
        <dbReference type="PDB" id="1LFU"/>
    </source>
</evidence>
<sequence>MDEQPRLMHSHAGVGMAGHPGLSQHLQDGAGGTEGEGGRKQDIGDILQQIMTITDQSLDEAQARKHALNCHRMKPALFNVLCEIKEKTVLSIRGAQEEEPTDPQLMRLDNMLLAEGVAGPEKGGGSAAAAAAAAASGGAGSDNSVEHSDYRAKLSQIRQIYHTELEKYEQACNEFTTHVMNLLREQSRTRPISPKEIERMVSIIHRKFSSIQMQLKQSTCEAVMILRSRFLDARRKRRNFNKQATEILNEYFYSHLSNPYPSEEAKEELAKKCGITVSQVSNWFGNKRIRYKKNIGKFQEEANIYAAKTAVTATNVSAHGSQANSPSTPNSAGSSSSFNMSNSGDLFMSVQSLNGDSYQGAQVGANVQSQVDTLRHVISQTGGYSDGLAASQMYSPQGISANGGWQDATTPSSVTSPTEGPGSVHSDTSN</sequence>
<accession>P41778</accession>
<dbReference type="EMBL" id="L27453">
    <property type="protein sequence ID" value="AAA21832.1"/>
    <property type="molecule type" value="mRNA"/>
</dbReference>
<dbReference type="EMBL" id="AF020196">
    <property type="protein sequence ID" value="AAB71191.1"/>
    <property type="molecule type" value="mRNA"/>
</dbReference>
<dbReference type="EMBL" id="BC058390">
    <property type="protein sequence ID" value="AAH58390.1"/>
    <property type="molecule type" value="mRNA"/>
</dbReference>
<dbReference type="CCDS" id="CCDS15461.1">
    <molecule id="P41778-1"/>
</dbReference>
<dbReference type="CCDS" id="CCDS15462.1">
    <molecule id="P41778-2"/>
</dbReference>
<dbReference type="PIR" id="A54863">
    <property type="entry name" value="A54863"/>
</dbReference>
<dbReference type="RefSeq" id="NP_001278437.1">
    <molecule id="P41778-2"/>
    <property type="nucleotide sequence ID" value="NM_001291508.1"/>
</dbReference>
<dbReference type="RefSeq" id="NP_032809.1">
    <molecule id="P41778-2"/>
    <property type="nucleotide sequence ID" value="NM_008783.3"/>
</dbReference>
<dbReference type="RefSeq" id="NP_899198.1">
    <molecule id="P41778-1"/>
    <property type="nucleotide sequence ID" value="NM_183355.3"/>
</dbReference>
<dbReference type="PDB" id="1DU6">
    <property type="method" value="NMR"/>
    <property type="chains" value="A=241-294"/>
</dbReference>
<dbReference type="PDB" id="1LFU">
    <property type="method" value="NMR"/>
    <property type="chains" value="P=233-313"/>
</dbReference>
<dbReference type="PDBsum" id="1DU6"/>
<dbReference type="PDBsum" id="1LFU"/>
<dbReference type="BMRB" id="P41778"/>
<dbReference type="SMR" id="P41778"/>
<dbReference type="BioGRID" id="202037">
    <property type="interactions" value="23"/>
</dbReference>
<dbReference type="CORUM" id="P41778"/>
<dbReference type="DIP" id="DIP-6107N"/>
<dbReference type="FunCoup" id="P41778">
    <property type="interactions" value="3198"/>
</dbReference>
<dbReference type="IntAct" id="P41778">
    <property type="interactions" value="20"/>
</dbReference>
<dbReference type="MINT" id="P41778"/>
<dbReference type="STRING" id="10090.ENSMUSP00000135516"/>
<dbReference type="GlyGen" id="P41778">
    <property type="glycosylation" value="1 site"/>
</dbReference>
<dbReference type="iPTMnet" id="P41778"/>
<dbReference type="PhosphoSitePlus" id="P41778"/>
<dbReference type="PaxDb" id="10090-ENSMUSP00000135516"/>
<dbReference type="ProteomicsDB" id="287793">
    <molecule id="P41778-1"/>
</dbReference>
<dbReference type="ProteomicsDB" id="287794">
    <molecule id="P41778-2"/>
</dbReference>
<dbReference type="Pumba" id="P41778"/>
<dbReference type="Antibodypedia" id="1079">
    <property type="antibodies" value="427 antibodies from 36 providers"/>
</dbReference>
<dbReference type="DNASU" id="18514"/>
<dbReference type="Ensembl" id="ENSMUST00000072863.6">
    <molecule id="P41778-2"/>
    <property type="protein sequence ID" value="ENSMUSP00000072640.5"/>
    <property type="gene ID" value="ENSMUSG00000052534.16"/>
</dbReference>
<dbReference type="Ensembl" id="ENSMUST00000176540.8">
    <molecule id="P41778-1"/>
    <property type="protein sequence ID" value="ENSMUSP00000135516.2"/>
    <property type="gene ID" value="ENSMUSG00000052534.16"/>
</dbReference>
<dbReference type="Ensembl" id="ENSMUST00000176790.8">
    <molecule id="P41778-2"/>
    <property type="protein sequence ID" value="ENSMUSP00000134925.2"/>
    <property type="gene ID" value="ENSMUSG00000052534.16"/>
</dbReference>
<dbReference type="Ensembl" id="ENSMUST00000188912.7">
    <molecule id="P41778-2"/>
    <property type="protein sequence ID" value="ENSMUSP00000140606.2"/>
    <property type="gene ID" value="ENSMUSG00000052534.16"/>
</dbReference>
<dbReference type="GeneID" id="18514"/>
<dbReference type="KEGG" id="mmu:18514"/>
<dbReference type="UCSC" id="uc007dle.2">
    <molecule id="P41778-1"/>
    <property type="organism name" value="mouse"/>
</dbReference>
<dbReference type="AGR" id="MGI:97495"/>
<dbReference type="CTD" id="5087"/>
<dbReference type="MGI" id="MGI:97495">
    <property type="gene designation" value="Pbx1"/>
</dbReference>
<dbReference type="VEuPathDB" id="HostDB:ENSMUSG00000052534"/>
<dbReference type="eggNOG" id="KOG0774">
    <property type="taxonomic scope" value="Eukaryota"/>
</dbReference>
<dbReference type="GeneTree" id="ENSGT00940000154374"/>
<dbReference type="HOGENOM" id="CLU_041153_1_0_1"/>
<dbReference type="InParanoid" id="P41778"/>
<dbReference type="OMA" id="CHRMRHA"/>
<dbReference type="OrthoDB" id="4187154at2759"/>
<dbReference type="PhylomeDB" id="P41778"/>
<dbReference type="TreeFam" id="TF314340"/>
<dbReference type="BioGRID-ORCS" id="18514">
    <property type="hits" value="1 hit in 79 CRISPR screens"/>
</dbReference>
<dbReference type="ChiTaRS" id="Pbx1">
    <property type="organism name" value="mouse"/>
</dbReference>
<dbReference type="EvolutionaryTrace" id="P41778"/>
<dbReference type="PRO" id="PR:P41778"/>
<dbReference type="Proteomes" id="UP000000589">
    <property type="component" value="Chromosome 1"/>
</dbReference>
<dbReference type="RNAct" id="P41778">
    <property type="molecule type" value="protein"/>
</dbReference>
<dbReference type="Bgee" id="ENSMUSG00000052534">
    <property type="expression patterns" value="Expressed in rostral migratory stream and 239 other cell types or tissues"/>
</dbReference>
<dbReference type="ExpressionAtlas" id="P41778">
    <property type="expression patterns" value="baseline and differential"/>
</dbReference>
<dbReference type="GO" id="GO:0005737">
    <property type="term" value="C:cytoplasm"/>
    <property type="evidence" value="ECO:0000314"/>
    <property type="project" value="MGI"/>
</dbReference>
<dbReference type="GO" id="GO:0005654">
    <property type="term" value="C:nucleoplasm"/>
    <property type="evidence" value="ECO:0000304"/>
    <property type="project" value="Reactome"/>
</dbReference>
<dbReference type="GO" id="GO:0005634">
    <property type="term" value="C:nucleus"/>
    <property type="evidence" value="ECO:0000314"/>
    <property type="project" value="UniProtKB"/>
</dbReference>
<dbReference type="GO" id="GO:0090575">
    <property type="term" value="C:RNA polymerase II transcription regulator complex"/>
    <property type="evidence" value="ECO:0007669"/>
    <property type="project" value="Ensembl"/>
</dbReference>
<dbReference type="GO" id="GO:0005667">
    <property type="term" value="C:transcription regulator complex"/>
    <property type="evidence" value="ECO:0000314"/>
    <property type="project" value="MGI"/>
</dbReference>
<dbReference type="GO" id="GO:0003677">
    <property type="term" value="F:DNA binding"/>
    <property type="evidence" value="ECO:0000314"/>
    <property type="project" value="MGI"/>
</dbReference>
<dbReference type="GO" id="GO:0001228">
    <property type="term" value="F:DNA-binding transcription activator activity, RNA polymerase II-specific"/>
    <property type="evidence" value="ECO:0000314"/>
    <property type="project" value="NTNU_SB"/>
</dbReference>
<dbReference type="GO" id="GO:0000981">
    <property type="term" value="F:DNA-binding transcription factor activity, RNA polymerase II-specific"/>
    <property type="evidence" value="ECO:0000314"/>
    <property type="project" value="UniProtKB"/>
</dbReference>
<dbReference type="GO" id="GO:0140297">
    <property type="term" value="F:DNA-binding transcription factor binding"/>
    <property type="evidence" value="ECO:0000353"/>
    <property type="project" value="UniProtKB"/>
</dbReference>
<dbReference type="GO" id="GO:0000978">
    <property type="term" value="F:RNA polymerase II cis-regulatory region sequence-specific DNA binding"/>
    <property type="evidence" value="ECO:0000314"/>
    <property type="project" value="NTNU_SB"/>
</dbReference>
<dbReference type="GO" id="GO:0000977">
    <property type="term" value="F:RNA polymerase II transcription regulatory region sequence-specific DNA binding"/>
    <property type="evidence" value="ECO:0000314"/>
    <property type="project" value="UniProtKB"/>
</dbReference>
<dbReference type="GO" id="GO:0043565">
    <property type="term" value="F:sequence-specific DNA binding"/>
    <property type="evidence" value="ECO:0000314"/>
    <property type="project" value="MGI"/>
</dbReference>
<dbReference type="GO" id="GO:0001222">
    <property type="term" value="F:transcription corepressor binding"/>
    <property type="evidence" value="ECO:0007669"/>
    <property type="project" value="Ensembl"/>
</dbReference>
<dbReference type="GO" id="GO:0030325">
    <property type="term" value="P:adrenal gland development"/>
    <property type="evidence" value="ECO:0000315"/>
    <property type="project" value="MGI"/>
</dbReference>
<dbReference type="GO" id="GO:0009887">
    <property type="term" value="P:animal organ morphogenesis"/>
    <property type="evidence" value="ECO:0000315"/>
    <property type="project" value="MGI"/>
</dbReference>
<dbReference type="GO" id="GO:0009952">
    <property type="term" value="P:anterior/posterior pattern specification"/>
    <property type="evidence" value="ECO:0000315"/>
    <property type="project" value="MGI"/>
</dbReference>
<dbReference type="GO" id="GO:0001658">
    <property type="term" value="P:branching involved in ureteric bud morphogenesis"/>
    <property type="evidence" value="ECO:0000314"/>
    <property type="project" value="MGI"/>
</dbReference>
<dbReference type="GO" id="GO:0008283">
    <property type="term" value="P:cell population proliferation"/>
    <property type="evidence" value="ECO:0000315"/>
    <property type="project" value="MGI"/>
</dbReference>
<dbReference type="GO" id="GO:0035162">
    <property type="term" value="P:embryonic hemopoiesis"/>
    <property type="evidence" value="ECO:0000315"/>
    <property type="project" value="MGI"/>
</dbReference>
<dbReference type="GO" id="GO:0030326">
    <property type="term" value="P:embryonic limb morphogenesis"/>
    <property type="evidence" value="ECO:0000316"/>
    <property type="project" value="MGI"/>
</dbReference>
<dbReference type="GO" id="GO:0048568">
    <property type="term" value="P:embryonic organ development"/>
    <property type="evidence" value="ECO:0000315"/>
    <property type="project" value="MGI"/>
</dbReference>
<dbReference type="GO" id="GO:0048706">
    <property type="term" value="P:embryonic skeletal system development"/>
    <property type="evidence" value="ECO:0000315"/>
    <property type="project" value="MGI"/>
</dbReference>
<dbReference type="GO" id="GO:0000086">
    <property type="term" value="P:G2/M transition of mitotic cell cycle"/>
    <property type="evidence" value="ECO:0000315"/>
    <property type="project" value="MGI"/>
</dbReference>
<dbReference type="GO" id="GO:0001779">
    <property type="term" value="P:natural killer cell differentiation"/>
    <property type="evidence" value="ECO:0000315"/>
    <property type="project" value="UniProtKB"/>
</dbReference>
<dbReference type="GO" id="GO:0045665">
    <property type="term" value="P:negative regulation of neuron differentiation"/>
    <property type="evidence" value="ECO:0000316"/>
    <property type="project" value="MGI"/>
</dbReference>
<dbReference type="GO" id="GO:0010971">
    <property type="term" value="P:positive regulation of G2/M transition of mitotic cell cycle"/>
    <property type="evidence" value="ECO:0000315"/>
    <property type="project" value="MGI"/>
</dbReference>
<dbReference type="GO" id="GO:2000648">
    <property type="term" value="P:positive regulation of stem cell proliferation"/>
    <property type="evidence" value="ECO:0000315"/>
    <property type="project" value="MGI"/>
</dbReference>
<dbReference type="GO" id="GO:0045944">
    <property type="term" value="P:positive regulation of transcription by RNA polymerase II"/>
    <property type="evidence" value="ECO:0000314"/>
    <property type="project" value="UniProtKB"/>
</dbReference>
<dbReference type="GO" id="GO:0009954">
    <property type="term" value="P:proximal/distal pattern formation"/>
    <property type="evidence" value="ECO:0000315"/>
    <property type="project" value="MGI"/>
</dbReference>
<dbReference type="GO" id="GO:0042127">
    <property type="term" value="P:regulation of cell population proliferation"/>
    <property type="evidence" value="ECO:0000315"/>
    <property type="project" value="MGI"/>
</dbReference>
<dbReference type="GO" id="GO:0030278">
    <property type="term" value="P:regulation of ossification"/>
    <property type="evidence" value="ECO:0000315"/>
    <property type="project" value="MGI"/>
</dbReference>
<dbReference type="GO" id="GO:0007548">
    <property type="term" value="P:sex differentiation"/>
    <property type="evidence" value="ECO:0007669"/>
    <property type="project" value="UniProtKB-KW"/>
</dbReference>
<dbReference type="GO" id="GO:0048536">
    <property type="term" value="P:spleen development"/>
    <property type="evidence" value="ECO:0000315"/>
    <property type="project" value="MGI"/>
</dbReference>
<dbReference type="GO" id="GO:0072089">
    <property type="term" value="P:stem cell proliferation"/>
    <property type="evidence" value="ECO:0000315"/>
    <property type="project" value="MGI"/>
</dbReference>
<dbReference type="GO" id="GO:0006694">
    <property type="term" value="P:steroid biosynthetic process"/>
    <property type="evidence" value="ECO:0007669"/>
    <property type="project" value="UniProtKB-KW"/>
</dbReference>
<dbReference type="GO" id="GO:0048538">
    <property type="term" value="P:thymus development"/>
    <property type="evidence" value="ECO:0000315"/>
    <property type="project" value="MGI"/>
</dbReference>
<dbReference type="GO" id="GO:0001655">
    <property type="term" value="P:urogenital system development"/>
    <property type="evidence" value="ECO:0000315"/>
    <property type="project" value="MGI"/>
</dbReference>
<dbReference type="CDD" id="cd00086">
    <property type="entry name" value="homeodomain"/>
    <property type="match status" value="1"/>
</dbReference>
<dbReference type="FunFam" id="1.10.10.60:FF:000277">
    <property type="entry name" value="Pre-B-cell leukemia transcription factor 1"/>
    <property type="match status" value="1"/>
</dbReference>
<dbReference type="Gene3D" id="1.10.10.60">
    <property type="entry name" value="Homeodomain-like"/>
    <property type="match status" value="1"/>
</dbReference>
<dbReference type="InterPro" id="IPR001356">
    <property type="entry name" value="HD"/>
</dbReference>
<dbReference type="InterPro" id="IPR017970">
    <property type="entry name" value="Homeobox_CS"/>
</dbReference>
<dbReference type="InterPro" id="IPR009057">
    <property type="entry name" value="Homeodomain-like_sf"/>
</dbReference>
<dbReference type="InterPro" id="IPR008422">
    <property type="entry name" value="KN_HD"/>
</dbReference>
<dbReference type="InterPro" id="IPR005542">
    <property type="entry name" value="PBX_PBC_dom"/>
</dbReference>
<dbReference type="InterPro" id="IPR050224">
    <property type="entry name" value="TALE_homeobox"/>
</dbReference>
<dbReference type="PANTHER" id="PTHR11850">
    <property type="entry name" value="HOMEOBOX PROTEIN TRANSCRIPTION FACTORS"/>
    <property type="match status" value="1"/>
</dbReference>
<dbReference type="Pfam" id="PF05920">
    <property type="entry name" value="Homeobox_KN"/>
    <property type="match status" value="1"/>
</dbReference>
<dbReference type="Pfam" id="PF03792">
    <property type="entry name" value="PBC"/>
    <property type="match status" value="1"/>
</dbReference>
<dbReference type="SMART" id="SM00389">
    <property type="entry name" value="HOX"/>
    <property type="match status" value="1"/>
</dbReference>
<dbReference type="SUPFAM" id="SSF46689">
    <property type="entry name" value="Homeodomain-like"/>
    <property type="match status" value="1"/>
</dbReference>
<dbReference type="PROSITE" id="PS00027">
    <property type="entry name" value="HOMEOBOX_1"/>
    <property type="match status" value="1"/>
</dbReference>
<dbReference type="PROSITE" id="PS50071">
    <property type="entry name" value="HOMEOBOX_2"/>
    <property type="match status" value="1"/>
</dbReference>
<dbReference type="PROSITE" id="PS51978">
    <property type="entry name" value="PBC"/>
    <property type="match status" value="1"/>
</dbReference>
<keyword id="KW-0002">3D-structure</keyword>
<keyword id="KW-0010">Activator</keyword>
<keyword id="KW-0025">Alternative splicing</keyword>
<keyword id="KW-0217">Developmental protein</keyword>
<keyword id="KW-0221">Differentiation</keyword>
<keyword id="KW-0903">Direct protein sequencing</keyword>
<keyword id="KW-0238">DNA-binding</keyword>
<keyword id="KW-0371">Homeobox</keyword>
<keyword id="KW-0539">Nucleus</keyword>
<keyword id="KW-1185">Reference proteome</keyword>
<keyword id="KW-0726">Sexual differentiation</keyword>
<keyword id="KW-0755">Steroidogenesis</keyword>
<keyword id="KW-0804">Transcription</keyword>
<keyword id="KW-0805">Transcription regulation</keyword>
<proteinExistence type="evidence at protein level"/>
<feature type="chain" id="PRO_0000049236" description="Pre-B-cell leukemia transcription factor 1">
    <location>
        <begin position="1"/>
        <end position="430"/>
    </location>
</feature>
<feature type="domain" description="PBC" evidence="3">
    <location>
        <begin position="38"/>
        <end position="232"/>
    </location>
</feature>
<feature type="DNA-binding region" description="Homeobox; TALE-type" evidence="2">
    <location>
        <begin position="233"/>
        <end position="295"/>
    </location>
</feature>
<feature type="region of interest" description="Disordered" evidence="4">
    <location>
        <begin position="1"/>
        <end position="40"/>
    </location>
</feature>
<feature type="region of interest" description="PBC-A" evidence="3">
    <location>
        <begin position="45"/>
        <end position="124"/>
    </location>
</feature>
<feature type="region of interest" description="PBC-B" evidence="3">
    <location>
        <begin position="127"/>
        <end position="232"/>
    </location>
</feature>
<feature type="region of interest" description="Disordered" evidence="4">
    <location>
        <begin position="317"/>
        <end position="338"/>
    </location>
</feature>
<feature type="region of interest" description="Disordered" evidence="4">
    <location>
        <begin position="395"/>
        <end position="430"/>
    </location>
</feature>
<feature type="compositionally biased region" description="Low complexity" evidence="4">
    <location>
        <begin position="323"/>
        <end position="338"/>
    </location>
</feature>
<feature type="compositionally biased region" description="Polar residues" evidence="4">
    <location>
        <begin position="407"/>
        <end position="418"/>
    </location>
</feature>
<feature type="site" description="Required for binding to the NFIL3 promoter" evidence="12">
    <location>
        <position position="286"/>
    </location>
</feature>
<feature type="splice variant" id="VSP_002273" description="In isoform PBX1b." evidence="18">
    <original>SSSSFNMSNSGDLF</original>
    <variation>GYPSPCYQPDRRIQ</variation>
    <location>
        <begin position="334"/>
        <end position="347"/>
    </location>
</feature>
<feature type="splice variant" id="VSP_002274" description="In isoform PBX1b." evidence="18">
    <location>
        <begin position="348"/>
        <end position="430"/>
    </location>
</feature>
<feature type="mutagenesis site" description="Slightly reduced binding to NFIL3 promoter." evidence="12">
    <original>R</original>
    <variation>A</variation>
    <location>
        <position position="237"/>
    </location>
</feature>
<feature type="mutagenesis site" description="Significantly reduced binding to NFIL3 promoter." evidence="12">
    <original>N</original>
    <variation>A</variation>
    <location>
        <position position="286"/>
    </location>
</feature>
<feature type="mutagenesis site" description="Slightly reduced binding to NFIL3 promoter." evidence="12">
    <original>R</original>
    <variation>A</variation>
    <location>
        <position position="290"/>
    </location>
</feature>
<feature type="strand" evidence="21">
    <location>
        <begin position="236"/>
        <end position="240"/>
    </location>
</feature>
<feature type="turn" evidence="20">
    <location>
        <begin position="241"/>
        <end position="243"/>
    </location>
</feature>
<feature type="helix" evidence="20">
    <location>
        <begin position="244"/>
        <end position="254"/>
    </location>
</feature>
<feature type="turn" evidence="20">
    <location>
        <begin position="255"/>
        <end position="257"/>
    </location>
</feature>
<feature type="helix" evidence="20">
    <location>
        <begin position="263"/>
        <end position="273"/>
    </location>
</feature>
<feature type="helix" evidence="20">
    <location>
        <begin position="277"/>
        <end position="287"/>
    </location>
</feature>
<feature type="turn" evidence="20">
    <location>
        <begin position="288"/>
        <end position="290"/>
    </location>
</feature>
<feature type="helix" evidence="21">
    <location>
        <begin position="295"/>
        <end position="307"/>
    </location>
</feature>
<comment type="function">
    <text evidence="1 10 11 12 13 14">Transcription factor which binds the DNA sequence 5'-TGATTGAT-3' as part of a heterodimer with HOX proteins such as HOXA1, HOXA5, HOXB7 and HOXB8 (By similarity). Binds the DNA sequence 5'-TGATTGAC-3' in complex with a nuclear factor which is not a class I HOX protein (By similarity). Has also been shown to bind the DNA sequence 5'-ATCAATCAA-3' cooperatively with HOXA5, HOXB7, HOXB8, HOXC8 and HOXD4 (PubMed:7791786). Acts as a transcriptional activator of PF4 in complex with MEIS1 (By similarity). Also activates transcription of SOX3 in complex with MEIS1 by binding to the 5'-TGATTGAC-3' consensus sequence (PubMed:19799567). In natural killer cells, binds to the NFIL3 promoter and acts as a transcriptional activator of NFIL3, promoting natural killer cell development (PubMed:32190943). Plays a role in the cAMP-dependent regulation of CYP17A1 gene expression via its cAMP-regulatory sequence (CRS1) (PubMed:7913464). Probably in complex with MEIS2, is involved in transcriptional regulation by KLF4 (By similarity). Acts as a transcriptional activator of NKX2-5 and a transcriptional repressor of CDKN2B (PubMed:22560297). Together with NKX2-5, required for spleen development through a mechanism that involves CDKN2B repression (PubMed:22560297).</text>
</comment>
<comment type="function">
    <molecule>Isoform PBX1b</molecule>
    <text evidence="7">As part of a PDX1:PBX1b:MEIS2B complex in pancreatic acinar cells, is involved in the transcriptional activation of the ELA1 enhancer; the complex binds to the enhancer B element and cooperates with the transcription factor 1 complex (PTF1) bound to the enhancer A element.</text>
</comment>
<comment type="function">
    <text evidence="9">(Microbial infection) In complex with PREP1, binds to the 5'-TGATTGAC-3' consensus sequence in the U5 region of Moloney murine leukemia virus and promotes viral transcription.</text>
</comment>
<comment type="subunit">
    <text evidence="1 5 6 8 10 13 15 16">Forms a heterodimer with MEIS1 which binds DNA (PubMed:19799567, PubMed:9525891). The PBX1-MEIS1 heterodimer binds a cAMP-responsive sequence in CYP17 (PubMed:9525891). It also binds a consensus region in the SOX3 promoter (PubMed:19799567). PBX1 forms heterotrimers with MEIS1 and a number of HOX proteins including HOXA9, HOXD4, HOXD9 and HOXD10 (PubMed:10082572, PubMed:10523646, PubMed:12409300, PubMed:9315626). Forms heterodimers with HOXA1, HOXA5, HOXB7 and HOXB8 which bind the 5'-TGATTGAT-3' consensus sequence (By similarity). Also forms heterodimers with HOXA5, HOXB7, HOXB8, HOXC8 and HOXD4 which bind the 5'-ATCAATCAA-3' consensus sequence (PubMed:7791786). Interacts with PBXIP1 (By similarity). Interacts with TLX1 (By similarity). Interacts with FOXC1 (By similarity). Interacts with MN1 (By similarity).</text>
</comment>
<comment type="subunit">
    <molecule>Isoform PBX1a</molecule>
    <text evidence="1">Interacts with MEIS2 isoform Meis2D, SP1, SP3 and KLF4.</text>
</comment>
<comment type="subunit">
    <molecule>Isoform PBX1b</molecule>
    <text evidence="7 17">Part of a PDX1:PBX1b:MEIS2B complex; PBX1b recruits MEIS2B to the complex.</text>
</comment>
<comment type="interaction">
    <interactant intactId="EBI-6996259">
        <id>P41778</id>
    </interactant>
    <interactant intactId="EBI-925334">
        <id>P09631</id>
        <label>Hoxa9</label>
    </interactant>
    <organismsDiffer>false</organismsDiffer>
    <experiments>2</experiments>
</comment>
<comment type="interaction">
    <interactant intactId="EBI-6996259">
        <id>P41778</id>
    </interactant>
    <interactant intactId="EBI-15992861">
        <id>P09023</id>
        <label>Hoxb6</label>
    </interactant>
    <organismsDiffer>false</organismsDiffer>
    <experiments>2</experiments>
</comment>
<comment type="interaction">
    <interactant intactId="EBI-6996259">
        <id>P41778</id>
    </interactant>
    <interactant intactId="EBI-925374">
        <id>P09632</id>
        <label>Hoxb8</label>
    </interactant>
    <organismsDiffer>false</organismsDiffer>
    <experiments>4</experiments>
</comment>
<comment type="subcellular location">
    <subcellularLocation>
        <location evidence="12">Nucleus</location>
    </subcellularLocation>
</comment>
<comment type="alternative products">
    <event type="alternative splicing"/>
    <isoform>
        <id>P41778-1</id>
        <name>PBX1a</name>
        <sequence type="displayed"/>
    </isoform>
    <isoform>
        <id>P41778-2</id>
        <name>PBX1b</name>
        <sequence type="described" ref="VSP_002273 VSP_002274"/>
    </isoform>
</comment>
<comment type="tissue specificity">
    <text evidence="12">Expressed constitutively in natural killer cell precursors in bone marrow.</text>
</comment>
<comment type="domain">
    <text evidence="12">The homeobox is required for PBX1 nuclear localization and for transcriptional activation of NFIL3.</text>
</comment>
<comment type="disruption phenotype">
    <text evidence="12">Conditional knockout in hematopoietic cells leads to a reduction in the number of natural killer cell-committed progenitors in bone marrow, decreases the number of natural killer cells in bone marrow and spleen and reduces NFIL3 expression in bone marrow and splenic natural killer cells.</text>
</comment>
<comment type="similarity">
    <text evidence="19">Belongs to the TALE/PBX homeobox family.</text>
</comment>
<name>PBX1_MOUSE</name>
<gene>
    <name type="primary">Pbx1</name>
    <name type="synonym">Pbx-1</name>
</gene>
<organism>
    <name type="scientific">Mus musculus</name>
    <name type="common">Mouse</name>
    <dbReference type="NCBI Taxonomy" id="10090"/>
    <lineage>
        <taxon>Eukaryota</taxon>
        <taxon>Metazoa</taxon>
        <taxon>Chordata</taxon>
        <taxon>Craniata</taxon>
        <taxon>Vertebrata</taxon>
        <taxon>Euteleostomi</taxon>
        <taxon>Mammalia</taxon>
        <taxon>Eutheria</taxon>
        <taxon>Euarchontoglires</taxon>
        <taxon>Glires</taxon>
        <taxon>Rodentia</taxon>
        <taxon>Myomorpha</taxon>
        <taxon>Muroidea</taxon>
        <taxon>Muridae</taxon>
        <taxon>Murinae</taxon>
        <taxon>Mus</taxon>
        <taxon>Mus</taxon>
    </lineage>
</organism>
<reference key="1">
    <citation type="journal article" date="1994" name="J. Biol. Chem.">
        <title>A cAMP-regulatory sequence (CRS1) of CYP17 is a cellular target for the homeodomain protein Pbx1.</title>
        <authorList>
            <person name="Kagawa N."/>
            <person name="Ogo A."/>
            <person name="Takahashi Y."/>
            <person name="Iwamatsu A."/>
            <person name="Waterman M.R."/>
        </authorList>
    </citation>
    <scope>NUCLEOTIDE SEQUENCE [MRNA] (ISOFORM PBX1B)</scope>
    <scope>PARTIAL PROTEIN SEQUENCE</scope>
    <scope>FUNCTION</scope>
    <source>
        <tissue>Adrenal gland</tissue>
    </source>
</reference>
<reference key="2">
    <citation type="submission" date="1997-08" db="EMBL/GenBank/DDBJ databases">
        <authorList>
            <person name="Liu Y."/>
            <person name="MacDonald R.J."/>
        </authorList>
    </citation>
    <scope>NUCLEOTIDE SEQUENCE [MRNA] (ISOFORM PBX1A)</scope>
</reference>
<reference key="3">
    <citation type="journal article" date="2004" name="Genome Res.">
        <title>The status, quality, and expansion of the NIH full-length cDNA project: the Mammalian Gene Collection (MGC).</title>
        <authorList>
            <consortium name="The MGC Project Team"/>
        </authorList>
    </citation>
    <scope>NUCLEOTIDE SEQUENCE [LARGE SCALE MRNA] (ISOFORM PBX1A)</scope>
    <source>
        <strain>C57BL/6J</strain>
        <tissue>Brain</tissue>
    </source>
</reference>
<reference key="4">
    <citation type="journal article" date="1995" name="Mol. Cell. Biol.">
        <title>Both Pbx1 and E2A-Pbx1 bind the DNA motif ATCAATCAA cooperatively with the products of multiple murine Hox genes, some of which are themselves oncogenes.</title>
        <authorList>
            <person name="Lu Q."/>
            <person name="Knoepfler P.S."/>
            <person name="Scheele J."/>
            <person name="Wright D.D."/>
            <person name="Kamps M.P."/>
        </authorList>
    </citation>
    <scope>FUNCTION</scope>
    <scope>INTERACTION WITH HOXA5; HOXB7; HOXB8; HOXC8 AND HOXD4</scope>
</reference>
<reference key="5">
    <citation type="journal article" date="1997" name="Mol. Cell. Biol.">
        <title>Meis proteins are major in vivo DNA binding partners for wild-type but not chimeric Pbx proteins.</title>
        <authorList>
            <person name="Chang C.-P."/>
            <person name="Jacobs Y."/>
            <person name="Nakamura T."/>
            <person name="Jenkins N.A."/>
            <person name="Copeland N.G."/>
            <person name="Cleary M.L."/>
        </authorList>
    </citation>
    <scope>INTERACTION WITH MEIS1</scope>
</reference>
<reference key="6">
    <citation type="journal article" date="1998" name="J. Biol. Chem.">
        <title>Members of the Meis1 and Pbx homeodomain protein families cooperatively bind a cAMP-responsive sequence (CRS1) from bovine CYP17.</title>
        <authorList>
            <person name="Bischof L.J."/>
            <person name="Kagawa N."/>
            <person name="Moskow J.J."/>
            <person name="Takahashi Y."/>
            <person name="Iwamatsu A."/>
            <person name="Buchberg A.M."/>
            <person name="Waterman M.R."/>
        </authorList>
    </citation>
    <scope>INTERACTION WITH MEIS1</scope>
</reference>
<reference key="7">
    <citation type="journal article" date="1998" name="Mol. Cell. Biol.">
        <title>An endocrine-exocrine switch in the activity of the pancreatic homeodomain protein PDX1 through formation of a trimeric complex with PBX1b and MRG1 (MEIS2).</title>
        <authorList>
            <person name="Swift G.H."/>
            <person name="Liu Y."/>
            <person name="Rose S.D."/>
            <person name="Bischof L.J."/>
            <person name="Steelman S."/>
            <person name="Buchberg A.M."/>
            <person name="Wright C.V."/>
            <person name="MacDonald R.J."/>
        </authorList>
    </citation>
    <scope>IDENTIFICATION IN A COMPLEX WITH PDX1 AND MEIS2</scope>
</reference>
<reference key="8">
    <citation type="journal article" date="1999" name="Mol. Cell. Biol.">
        <title>HOXA9 forms triple complexes with PBX2 and MEIS1 in myeloid cells.</title>
        <authorList>
            <person name="Shen W.-F."/>
            <person name="Rozenfeld S."/>
            <person name="Kwong A."/>
            <person name="Koemueves L.G."/>
            <person name="Lawrence H.J."/>
            <person name="Largman C."/>
        </authorList>
    </citation>
    <scope>INTERACTION WITH HOXA9 AND MEIS1</scope>
</reference>
<reference key="9">
    <citation type="journal article" date="1999" name="Mol. Cell. Biol.">
        <title>PBX and MEIS as non-DNA-binding partners in trimeric complexes with HOX proteins.</title>
        <authorList>
            <person name="Shanmugam K."/>
            <person name="Green N.C."/>
            <person name="Rambaldi I."/>
            <person name="Saragovi H.U."/>
            <person name="Featherstone M.S."/>
        </authorList>
    </citation>
    <scope>INTERACTION WITH HOXD4; HOXD9; HOXD10 AND MEIS1</scope>
</reference>
<reference key="10">
    <citation type="journal article" date="2001" name="J. Biol. Chem.">
        <title>DNA binding and transcriptional activation by a PDX1.PBX1b.MEIS2b trimer and cooperation with a pancreas-specific basic helix-loop-helix complex.</title>
        <authorList>
            <person name="Liu Y."/>
            <person name="MacDonald R.J."/>
            <person name="Swift G.H."/>
        </authorList>
    </citation>
    <scope>INTERACTION WITH MEIS2</scope>
    <scope>IDENTIFICATION IN A COMPLEX WITH PDX1 AND MEIS2</scope>
</reference>
<reference key="11">
    <citation type="journal article" date="2003" name="Mol. Cell. Biol.">
        <title>Identification of homeodomain proteins, PBX1 and PREP1, involved in the transcription of murine leukemia virus.</title>
        <authorList>
            <person name="Chao S.H."/>
            <person name="Walker J.R."/>
            <person name="Chanda S.K."/>
            <person name="Gray N.S."/>
            <person name="Caldwell J.S."/>
        </authorList>
    </citation>
    <scope>FUNCTION (MICROBIAL INFECTION)</scope>
</reference>
<reference key="12">
    <citation type="journal article" date="2009" name="Biochem. J.">
        <title>PBX1 and MEIS1 up-regulate SOX3 gene expression by direct interaction with a consensus binding site within the basal promoter region.</title>
        <authorList>
            <person name="Mojsin M."/>
            <person name="Stevanovic M."/>
        </authorList>
    </citation>
    <scope>FUNCTION</scope>
</reference>
<reference key="13">
    <citation type="journal article" date="2010" name="Cell">
        <title>A tissue-specific atlas of mouse protein phosphorylation and expression.</title>
        <authorList>
            <person name="Huttlin E.L."/>
            <person name="Jedrychowski M.P."/>
            <person name="Elias J.E."/>
            <person name="Goswami T."/>
            <person name="Rad R."/>
            <person name="Beausoleil S.A."/>
            <person name="Villen J."/>
            <person name="Haas W."/>
            <person name="Sowa M.E."/>
            <person name="Gygi S.P."/>
        </authorList>
    </citation>
    <scope>IDENTIFICATION BY MASS SPECTROMETRY [LARGE SCALE ANALYSIS]</scope>
    <source>
        <tissue>Brain</tissue>
        <tissue>Testis</tissue>
    </source>
</reference>
<reference key="14">
    <citation type="journal article" date="2012" name="Dev. Cell">
        <title>Congenital asplenia in mice and humans with mutations in a Pbx/Nkx2-5/p15 module.</title>
        <authorList>
            <person name="Koss M."/>
            <person name="Bolze A."/>
            <person name="Brendolan A."/>
            <person name="Saggese M."/>
            <person name="Capellini T.D."/>
            <person name="Bojilova E."/>
            <person name="Boisson B."/>
            <person name="Prall O.W."/>
            <person name="Elliott D.A."/>
            <person name="Solloway M."/>
            <person name="Lenti E."/>
            <person name="Hidaka C."/>
            <person name="Chang C.P."/>
            <person name="Mahlaoui N."/>
            <person name="Harvey R.P."/>
            <person name="Casanova J.L."/>
            <person name="Selleri L."/>
        </authorList>
    </citation>
    <scope>FUNCTION</scope>
</reference>
<reference key="15">
    <citation type="journal article" date="2020" name="FASEB J.">
        <title>PBX1 promotes development of natural killer cells by binding directly to the Nfil3 promoter.</title>
        <authorList>
            <person name="Xu X."/>
            <person name="Zhou Y."/>
            <person name="Fu B."/>
            <person name="Zhang J."/>
            <person name="Dong Z."/>
            <person name="Zhang X."/>
            <person name="Shen N."/>
            <person name="Sun R."/>
            <person name="Tian Z."/>
            <person name="Wei H."/>
        </authorList>
    </citation>
    <scope>FUNCTION</scope>
    <scope>SUBCELLULAR LOCATION</scope>
    <scope>TISSUE SPECIFICITY</scope>
    <scope>DISRUPTION PHENOTYPE</scope>
    <scope>DOMAIN</scope>
    <scope>SITE</scope>
    <scope>MUTAGENESIS OF ARG-237; ASN-286 AND ARG-290</scope>
</reference>
<reference key="16">
    <citation type="journal article" date="2000" name="Biochemistry">
        <title>Conformational changes in the PBX homeodomain and C-terminal extension upon binding DNA and HOX-derived YPWM peptides(,).</title>
        <authorList>
            <person name="Sprules T."/>
            <person name="Green N."/>
            <person name="Featherstone M."/>
            <person name="Gehring K."/>
        </authorList>
    </citation>
    <scope>STRUCTURE BY NMR OF 241-294</scope>
</reference>
<reference key="17">
    <citation type="journal article" date="2003" name="J. Biol. Chem.">
        <title>Lock and key binding of the HOX YPWM peptide to the PBX homeodomain.</title>
        <authorList>
            <person name="Sprules T."/>
            <person name="Green N."/>
            <person name="Featherstone M."/>
            <person name="Gehring K."/>
        </authorList>
    </citation>
    <scope>STRUCTURE BY NMR OF 233-313 IN COMPLEX WITH DNA</scope>
</reference>